<organism>
    <name type="scientific">Pseudomonas aeruginosa (strain ATCC 15692 / DSM 22644 / CIP 104116 / JCM 14847 / LMG 12228 / 1C / PRS 101 / PAO1)</name>
    <dbReference type="NCBI Taxonomy" id="208964"/>
    <lineage>
        <taxon>Bacteria</taxon>
        <taxon>Pseudomonadati</taxon>
        <taxon>Pseudomonadota</taxon>
        <taxon>Gammaproteobacteria</taxon>
        <taxon>Pseudomonadales</taxon>
        <taxon>Pseudomonadaceae</taxon>
        <taxon>Pseudomonas</taxon>
    </lineage>
</organism>
<sequence>MDFPTRFDVIVIGGGHAGTEAALAAARMGVKTLLLTHNVETLGQMSCNPAIGGIGKSHLVKEIDALGGAMAEATDKGGIQFRILNSRKGPAVRATRAQADRVLYKAAIRHTLENQPNLWIFQQACDDLIVEQDQVRGVVTQMGLRFHADNVVLTTGTFLGGLIHIGLENYSGGRAGDPPSIALARRLRELPLRVGRLKTGTPPRIDGRSVDFSVMTEQPGDTPIPVMSFLGSKEQHPEQVSCWITHTNARTHEIIAANLDRSPMYSGVIEGIGPRYCPSIEDKIHRFADKESHQVFLEPEGLTTHELYPNGISTSLPFDVQLQIVRSIRGMENAHIVRPGYAIEYDFFDPRDLRYSLETKVIGGLFFAGQINGTTGYEEAGAQGLLAGANAALRSQGKDSWCPRRDEAYIGVLVDDLITLGTQEPYRMFTSRAEYRLILREDNADLRLTEKGRELGLVDDRRWAAFEAKREGIEREEQRLKSTWVRPNTPQGDAIAERFGTPLTHEYNLLNLLSRPEIDYAGLVEITGNAVDNPQVAEQVEIRTKYAGYIDRQQEEISRLRASEDTRLPVDIDYLGISGLSKEIQNKLNQARPETLGQASRIPGVTPAAISLLLIHLKKRASGRQLEQSA</sequence>
<evidence type="ECO:0000255" key="1">
    <source>
        <dbReference type="HAMAP-Rule" id="MF_00129"/>
    </source>
</evidence>
<gene>
    <name evidence="1" type="primary">mnmG</name>
    <name evidence="1" type="synonym">gidA</name>
    <name type="ordered locus">PA5565</name>
</gene>
<proteinExistence type="inferred from homology"/>
<accession>Q9HT09</accession>
<name>MNMG_PSEAE</name>
<dbReference type="EMBL" id="AE004091">
    <property type="protein sequence ID" value="AAG08950.1"/>
    <property type="molecule type" value="Genomic_DNA"/>
</dbReference>
<dbReference type="PIR" id="D82950">
    <property type="entry name" value="D82950"/>
</dbReference>
<dbReference type="RefSeq" id="NP_254252.1">
    <property type="nucleotide sequence ID" value="NC_002516.2"/>
</dbReference>
<dbReference type="RefSeq" id="WP_003114649.1">
    <property type="nucleotide sequence ID" value="NC_002516.2"/>
</dbReference>
<dbReference type="SMR" id="Q9HT09"/>
<dbReference type="FunCoup" id="Q9HT09">
    <property type="interactions" value="748"/>
</dbReference>
<dbReference type="STRING" id="208964.PA5565"/>
<dbReference type="PaxDb" id="208964-PA5565"/>
<dbReference type="GeneID" id="877676"/>
<dbReference type="KEGG" id="pae:PA5565"/>
<dbReference type="PATRIC" id="fig|208964.12.peg.5831"/>
<dbReference type="PseudoCAP" id="PA5565"/>
<dbReference type="HOGENOM" id="CLU_007831_2_2_6"/>
<dbReference type="InParanoid" id="Q9HT09"/>
<dbReference type="OrthoDB" id="9815560at2"/>
<dbReference type="PhylomeDB" id="Q9HT09"/>
<dbReference type="BioCyc" id="PAER208964:G1FZ6-5692-MONOMER"/>
<dbReference type="Proteomes" id="UP000002438">
    <property type="component" value="Chromosome"/>
</dbReference>
<dbReference type="GO" id="GO:0005829">
    <property type="term" value="C:cytosol"/>
    <property type="evidence" value="ECO:0000318"/>
    <property type="project" value="GO_Central"/>
</dbReference>
<dbReference type="GO" id="GO:0050660">
    <property type="term" value="F:flavin adenine dinucleotide binding"/>
    <property type="evidence" value="ECO:0000250"/>
    <property type="project" value="PseudoCAP"/>
</dbReference>
<dbReference type="GO" id="GO:0030488">
    <property type="term" value="P:tRNA methylation"/>
    <property type="evidence" value="ECO:0000250"/>
    <property type="project" value="PseudoCAP"/>
</dbReference>
<dbReference type="GO" id="GO:0002098">
    <property type="term" value="P:tRNA wobble uridine modification"/>
    <property type="evidence" value="ECO:0000250"/>
    <property type="project" value="PseudoCAP"/>
</dbReference>
<dbReference type="FunFam" id="1.10.10.1800:FF:000001">
    <property type="entry name" value="tRNA uridine 5-carboxymethylaminomethyl modification enzyme MnmG"/>
    <property type="match status" value="1"/>
</dbReference>
<dbReference type="FunFam" id="1.10.150.570:FF:000001">
    <property type="entry name" value="tRNA uridine 5-carboxymethylaminomethyl modification enzyme MnmG"/>
    <property type="match status" value="1"/>
</dbReference>
<dbReference type="FunFam" id="3.50.50.60:FF:000002">
    <property type="entry name" value="tRNA uridine 5-carboxymethylaminomethyl modification enzyme MnmG"/>
    <property type="match status" value="1"/>
</dbReference>
<dbReference type="FunFam" id="3.50.50.60:FF:000010">
    <property type="entry name" value="tRNA uridine 5-carboxymethylaminomethyl modification enzyme MnmG"/>
    <property type="match status" value="1"/>
</dbReference>
<dbReference type="Gene3D" id="3.50.50.60">
    <property type="entry name" value="FAD/NAD(P)-binding domain"/>
    <property type="match status" value="2"/>
</dbReference>
<dbReference type="Gene3D" id="1.10.150.570">
    <property type="entry name" value="GidA associated domain, C-terminal subdomain"/>
    <property type="match status" value="1"/>
</dbReference>
<dbReference type="Gene3D" id="1.10.10.1800">
    <property type="entry name" value="tRNA uridine 5-carboxymethylaminomethyl modification enzyme MnmG/GidA"/>
    <property type="match status" value="1"/>
</dbReference>
<dbReference type="HAMAP" id="MF_00129">
    <property type="entry name" value="MnmG_GidA"/>
    <property type="match status" value="1"/>
</dbReference>
<dbReference type="InterPro" id="IPR036188">
    <property type="entry name" value="FAD/NAD-bd_sf"/>
</dbReference>
<dbReference type="InterPro" id="IPR049312">
    <property type="entry name" value="GIDA_C_N"/>
</dbReference>
<dbReference type="InterPro" id="IPR004416">
    <property type="entry name" value="MnmG"/>
</dbReference>
<dbReference type="InterPro" id="IPR002218">
    <property type="entry name" value="MnmG-rel"/>
</dbReference>
<dbReference type="InterPro" id="IPR020595">
    <property type="entry name" value="MnmG-rel_CS"/>
</dbReference>
<dbReference type="InterPro" id="IPR026904">
    <property type="entry name" value="MnmG_C"/>
</dbReference>
<dbReference type="InterPro" id="IPR047001">
    <property type="entry name" value="MnmG_C_subdom"/>
</dbReference>
<dbReference type="InterPro" id="IPR044920">
    <property type="entry name" value="MnmG_C_subdom_sf"/>
</dbReference>
<dbReference type="InterPro" id="IPR040131">
    <property type="entry name" value="MnmG_N"/>
</dbReference>
<dbReference type="NCBIfam" id="TIGR00136">
    <property type="entry name" value="mnmG_gidA"/>
    <property type="match status" value="1"/>
</dbReference>
<dbReference type="PANTHER" id="PTHR11806">
    <property type="entry name" value="GLUCOSE INHIBITED DIVISION PROTEIN A"/>
    <property type="match status" value="1"/>
</dbReference>
<dbReference type="PANTHER" id="PTHR11806:SF0">
    <property type="entry name" value="PROTEIN MTO1 HOMOLOG, MITOCHONDRIAL"/>
    <property type="match status" value="1"/>
</dbReference>
<dbReference type="Pfam" id="PF01134">
    <property type="entry name" value="GIDA"/>
    <property type="match status" value="1"/>
</dbReference>
<dbReference type="Pfam" id="PF21680">
    <property type="entry name" value="GIDA_C_1st"/>
    <property type="match status" value="1"/>
</dbReference>
<dbReference type="Pfam" id="PF13932">
    <property type="entry name" value="SAM_GIDA_C"/>
    <property type="match status" value="1"/>
</dbReference>
<dbReference type="PRINTS" id="PR00368">
    <property type="entry name" value="FADPNR"/>
</dbReference>
<dbReference type="SMART" id="SM01228">
    <property type="entry name" value="GIDA_assoc_3"/>
    <property type="match status" value="1"/>
</dbReference>
<dbReference type="SUPFAM" id="SSF51905">
    <property type="entry name" value="FAD/NAD(P)-binding domain"/>
    <property type="match status" value="1"/>
</dbReference>
<dbReference type="PROSITE" id="PS01280">
    <property type="entry name" value="GIDA_1"/>
    <property type="match status" value="1"/>
</dbReference>
<dbReference type="PROSITE" id="PS01281">
    <property type="entry name" value="GIDA_2"/>
    <property type="match status" value="1"/>
</dbReference>
<feature type="chain" id="PRO_0000117153" description="tRNA uridine 5-carboxymethylaminomethyl modification enzyme MnmG">
    <location>
        <begin position="1"/>
        <end position="630"/>
    </location>
</feature>
<feature type="binding site" evidence="1">
    <location>
        <begin position="13"/>
        <end position="18"/>
    </location>
    <ligand>
        <name>FAD</name>
        <dbReference type="ChEBI" id="CHEBI:57692"/>
    </ligand>
</feature>
<feature type="binding site" evidence="1">
    <location>
        <begin position="273"/>
        <end position="287"/>
    </location>
    <ligand>
        <name>NAD(+)</name>
        <dbReference type="ChEBI" id="CHEBI:57540"/>
    </ligand>
</feature>
<reference key="1">
    <citation type="journal article" date="2000" name="Nature">
        <title>Complete genome sequence of Pseudomonas aeruginosa PAO1, an opportunistic pathogen.</title>
        <authorList>
            <person name="Stover C.K."/>
            <person name="Pham X.-Q.T."/>
            <person name="Erwin A.L."/>
            <person name="Mizoguchi S.D."/>
            <person name="Warrener P."/>
            <person name="Hickey M.J."/>
            <person name="Brinkman F.S.L."/>
            <person name="Hufnagle W.O."/>
            <person name="Kowalik D.J."/>
            <person name="Lagrou M."/>
            <person name="Garber R.L."/>
            <person name="Goltry L."/>
            <person name="Tolentino E."/>
            <person name="Westbrock-Wadman S."/>
            <person name="Yuan Y."/>
            <person name="Brody L.L."/>
            <person name="Coulter S.N."/>
            <person name="Folger K.R."/>
            <person name="Kas A."/>
            <person name="Larbig K."/>
            <person name="Lim R.M."/>
            <person name="Smith K.A."/>
            <person name="Spencer D.H."/>
            <person name="Wong G.K.-S."/>
            <person name="Wu Z."/>
            <person name="Paulsen I.T."/>
            <person name="Reizer J."/>
            <person name="Saier M.H. Jr."/>
            <person name="Hancock R.E.W."/>
            <person name="Lory S."/>
            <person name="Olson M.V."/>
        </authorList>
    </citation>
    <scope>NUCLEOTIDE SEQUENCE [LARGE SCALE GENOMIC DNA]</scope>
    <source>
        <strain>ATCC 15692 / DSM 22644 / CIP 104116 / JCM 14847 / LMG 12228 / 1C / PRS 101 / PAO1</strain>
    </source>
</reference>
<keyword id="KW-0963">Cytoplasm</keyword>
<keyword id="KW-0274">FAD</keyword>
<keyword id="KW-0285">Flavoprotein</keyword>
<keyword id="KW-0520">NAD</keyword>
<keyword id="KW-1185">Reference proteome</keyword>
<keyword id="KW-0819">tRNA processing</keyword>
<comment type="function">
    <text evidence="1">NAD-binding protein involved in the addition of a carboxymethylaminomethyl (cmnm) group at the wobble position (U34) of certain tRNAs, forming tRNA-cmnm(5)s(2)U34.</text>
</comment>
<comment type="cofactor">
    <cofactor evidence="1">
        <name>FAD</name>
        <dbReference type="ChEBI" id="CHEBI:57692"/>
    </cofactor>
</comment>
<comment type="subunit">
    <text evidence="1">Homodimer. Heterotetramer of two MnmE and two MnmG subunits.</text>
</comment>
<comment type="subcellular location">
    <subcellularLocation>
        <location evidence="1">Cytoplasm</location>
    </subcellularLocation>
</comment>
<comment type="similarity">
    <text evidence="1">Belongs to the MnmG family.</text>
</comment>
<protein>
    <recommendedName>
        <fullName evidence="1">tRNA uridine 5-carboxymethylaminomethyl modification enzyme MnmG</fullName>
    </recommendedName>
    <alternativeName>
        <fullName evidence="1">Glucose-inhibited division protein A</fullName>
    </alternativeName>
</protein>